<accession>Q39XZ7</accession>
<comment type="function">
    <text evidence="1">One of the primary rRNA binding proteins, it binds specifically to the 5'-end of 16S ribosomal RNA.</text>
</comment>
<comment type="subunit">
    <text evidence="1">Part of the 30S ribosomal subunit.</text>
</comment>
<comment type="similarity">
    <text evidence="1">Belongs to the universal ribosomal protein uS17 family.</text>
</comment>
<name>RS17_GEOMG</name>
<sequence>MSQRGNRKTQVGIVVSDKMDKTVVVQVSHLVKHPVYNKYIKRSVKYKAHDEENSCKSGDRVQIVETRPLSKDKRWRVRQIIDRFE</sequence>
<evidence type="ECO:0000255" key="1">
    <source>
        <dbReference type="HAMAP-Rule" id="MF_01345"/>
    </source>
</evidence>
<evidence type="ECO:0000305" key="2"/>
<reference key="1">
    <citation type="journal article" date="2009" name="BMC Microbiol.">
        <title>The genome sequence of Geobacter metallireducens: features of metabolism, physiology and regulation common and dissimilar to Geobacter sulfurreducens.</title>
        <authorList>
            <person name="Aklujkar M."/>
            <person name="Krushkal J."/>
            <person name="DiBartolo G."/>
            <person name="Lapidus A."/>
            <person name="Land M.L."/>
            <person name="Lovley D.R."/>
        </authorList>
    </citation>
    <scope>NUCLEOTIDE SEQUENCE [LARGE SCALE GENOMIC DNA]</scope>
    <source>
        <strain>ATCC 53774 / DSM 7210 / GS-15</strain>
    </source>
</reference>
<proteinExistence type="inferred from homology"/>
<keyword id="KW-1185">Reference proteome</keyword>
<keyword id="KW-0687">Ribonucleoprotein</keyword>
<keyword id="KW-0689">Ribosomal protein</keyword>
<keyword id="KW-0694">RNA-binding</keyword>
<keyword id="KW-0699">rRNA-binding</keyword>
<dbReference type="EMBL" id="CP000148">
    <property type="protein sequence ID" value="ABB30877.1"/>
    <property type="molecule type" value="Genomic_DNA"/>
</dbReference>
<dbReference type="RefSeq" id="WP_004514245.1">
    <property type="nucleotide sequence ID" value="NC_007517.1"/>
</dbReference>
<dbReference type="SMR" id="Q39XZ7"/>
<dbReference type="STRING" id="269799.Gmet_0635"/>
<dbReference type="KEGG" id="gme:Gmet_0635"/>
<dbReference type="eggNOG" id="COG0186">
    <property type="taxonomic scope" value="Bacteria"/>
</dbReference>
<dbReference type="HOGENOM" id="CLU_073626_1_2_7"/>
<dbReference type="Proteomes" id="UP000007073">
    <property type="component" value="Chromosome"/>
</dbReference>
<dbReference type="GO" id="GO:0022627">
    <property type="term" value="C:cytosolic small ribosomal subunit"/>
    <property type="evidence" value="ECO:0007669"/>
    <property type="project" value="TreeGrafter"/>
</dbReference>
<dbReference type="GO" id="GO:0019843">
    <property type="term" value="F:rRNA binding"/>
    <property type="evidence" value="ECO:0007669"/>
    <property type="project" value="UniProtKB-UniRule"/>
</dbReference>
<dbReference type="GO" id="GO:0003735">
    <property type="term" value="F:structural constituent of ribosome"/>
    <property type="evidence" value="ECO:0007669"/>
    <property type="project" value="InterPro"/>
</dbReference>
<dbReference type="GO" id="GO:0006412">
    <property type="term" value="P:translation"/>
    <property type="evidence" value="ECO:0007669"/>
    <property type="project" value="UniProtKB-UniRule"/>
</dbReference>
<dbReference type="CDD" id="cd00364">
    <property type="entry name" value="Ribosomal_uS17"/>
    <property type="match status" value="1"/>
</dbReference>
<dbReference type="FunFam" id="2.40.50.140:FF:000311">
    <property type="entry name" value="30S ribosomal protein S17"/>
    <property type="match status" value="1"/>
</dbReference>
<dbReference type="Gene3D" id="2.40.50.140">
    <property type="entry name" value="Nucleic acid-binding proteins"/>
    <property type="match status" value="1"/>
</dbReference>
<dbReference type="HAMAP" id="MF_01345_B">
    <property type="entry name" value="Ribosomal_uS17_B"/>
    <property type="match status" value="1"/>
</dbReference>
<dbReference type="InterPro" id="IPR012340">
    <property type="entry name" value="NA-bd_OB-fold"/>
</dbReference>
<dbReference type="InterPro" id="IPR000266">
    <property type="entry name" value="Ribosomal_uS17"/>
</dbReference>
<dbReference type="InterPro" id="IPR019984">
    <property type="entry name" value="Ribosomal_uS17_bact/chlr"/>
</dbReference>
<dbReference type="InterPro" id="IPR019979">
    <property type="entry name" value="Ribosomal_uS17_CS"/>
</dbReference>
<dbReference type="NCBIfam" id="NF004123">
    <property type="entry name" value="PRK05610.1"/>
    <property type="match status" value="1"/>
</dbReference>
<dbReference type="NCBIfam" id="TIGR03635">
    <property type="entry name" value="uS17_bact"/>
    <property type="match status" value="1"/>
</dbReference>
<dbReference type="PANTHER" id="PTHR10744">
    <property type="entry name" value="40S RIBOSOMAL PROTEIN S11 FAMILY MEMBER"/>
    <property type="match status" value="1"/>
</dbReference>
<dbReference type="PANTHER" id="PTHR10744:SF1">
    <property type="entry name" value="SMALL RIBOSOMAL SUBUNIT PROTEIN US17M"/>
    <property type="match status" value="1"/>
</dbReference>
<dbReference type="Pfam" id="PF00366">
    <property type="entry name" value="Ribosomal_S17"/>
    <property type="match status" value="1"/>
</dbReference>
<dbReference type="PRINTS" id="PR00973">
    <property type="entry name" value="RIBOSOMALS17"/>
</dbReference>
<dbReference type="SUPFAM" id="SSF50249">
    <property type="entry name" value="Nucleic acid-binding proteins"/>
    <property type="match status" value="1"/>
</dbReference>
<dbReference type="PROSITE" id="PS00056">
    <property type="entry name" value="RIBOSOMAL_S17"/>
    <property type="match status" value="1"/>
</dbReference>
<gene>
    <name evidence="1" type="primary">rpsQ</name>
    <name type="ordered locus">Gmet_0635</name>
</gene>
<protein>
    <recommendedName>
        <fullName evidence="1">Small ribosomal subunit protein uS17</fullName>
    </recommendedName>
    <alternativeName>
        <fullName evidence="2">30S ribosomal protein S17</fullName>
    </alternativeName>
</protein>
<feature type="chain" id="PRO_0000233481" description="Small ribosomal subunit protein uS17">
    <location>
        <begin position="1"/>
        <end position="85"/>
    </location>
</feature>
<organism>
    <name type="scientific">Geobacter metallireducens (strain ATCC 53774 / DSM 7210 / GS-15)</name>
    <dbReference type="NCBI Taxonomy" id="269799"/>
    <lineage>
        <taxon>Bacteria</taxon>
        <taxon>Pseudomonadati</taxon>
        <taxon>Thermodesulfobacteriota</taxon>
        <taxon>Desulfuromonadia</taxon>
        <taxon>Geobacterales</taxon>
        <taxon>Geobacteraceae</taxon>
        <taxon>Geobacter</taxon>
    </lineage>
</organism>